<geneLocation type="chloroplast"/>
<protein>
    <recommendedName>
        <fullName evidence="1">Maturase K</fullName>
    </recommendedName>
    <alternativeName>
        <fullName evidence="1">Intron maturase</fullName>
    </alternativeName>
</protein>
<dbReference type="EMBL" id="AY490955">
    <property type="protein sequence ID" value="AAS67568.1"/>
    <property type="molecule type" value="Genomic_DNA"/>
</dbReference>
<dbReference type="GO" id="GO:0009507">
    <property type="term" value="C:chloroplast"/>
    <property type="evidence" value="ECO:0007669"/>
    <property type="project" value="UniProtKB-SubCell"/>
</dbReference>
<dbReference type="GO" id="GO:0003723">
    <property type="term" value="F:RNA binding"/>
    <property type="evidence" value="ECO:0007669"/>
    <property type="project" value="UniProtKB-KW"/>
</dbReference>
<dbReference type="GO" id="GO:0006397">
    <property type="term" value="P:mRNA processing"/>
    <property type="evidence" value="ECO:0007669"/>
    <property type="project" value="UniProtKB-KW"/>
</dbReference>
<dbReference type="GO" id="GO:0008380">
    <property type="term" value="P:RNA splicing"/>
    <property type="evidence" value="ECO:0007669"/>
    <property type="project" value="UniProtKB-UniRule"/>
</dbReference>
<dbReference type="GO" id="GO:0008033">
    <property type="term" value="P:tRNA processing"/>
    <property type="evidence" value="ECO:0007669"/>
    <property type="project" value="UniProtKB-KW"/>
</dbReference>
<dbReference type="HAMAP" id="MF_01390">
    <property type="entry name" value="MatK"/>
    <property type="match status" value="1"/>
</dbReference>
<dbReference type="InterPro" id="IPR024937">
    <property type="entry name" value="Domain_X"/>
</dbReference>
<dbReference type="InterPro" id="IPR002866">
    <property type="entry name" value="Maturase_MatK"/>
</dbReference>
<dbReference type="InterPro" id="IPR024942">
    <property type="entry name" value="Maturase_MatK_N"/>
</dbReference>
<dbReference type="PANTHER" id="PTHR34811">
    <property type="entry name" value="MATURASE K"/>
    <property type="match status" value="1"/>
</dbReference>
<dbReference type="PANTHER" id="PTHR34811:SF1">
    <property type="entry name" value="MATURASE K"/>
    <property type="match status" value="1"/>
</dbReference>
<dbReference type="Pfam" id="PF01348">
    <property type="entry name" value="Intron_maturas2"/>
    <property type="match status" value="1"/>
</dbReference>
<dbReference type="Pfam" id="PF01824">
    <property type="entry name" value="MatK_N"/>
    <property type="match status" value="1"/>
</dbReference>
<keyword id="KW-0150">Chloroplast</keyword>
<keyword id="KW-0507">mRNA processing</keyword>
<keyword id="KW-0934">Plastid</keyword>
<keyword id="KW-0694">RNA-binding</keyword>
<keyword id="KW-0819">tRNA processing</keyword>
<feature type="chain" id="PRO_0000143282" description="Maturase K">
    <location>
        <begin position="1"/>
        <end position="504"/>
    </location>
</feature>
<evidence type="ECO:0000255" key="1">
    <source>
        <dbReference type="HAMAP-Rule" id="MF_01390"/>
    </source>
</evidence>
<proteinExistence type="inferred from homology"/>
<name>MATK_BERLA</name>
<accession>Q53DU6</accession>
<comment type="function">
    <text evidence="1">Usually encoded in the trnK tRNA gene intron. Probably assists in splicing its own and other chloroplast group II introns.</text>
</comment>
<comment type="subcellular location">
    <subcellularLocation>
        <location>Plastid</location>
        <location>Chloroplast</location>
    </subcellularLocation>
</comment>
<comment type="similarity">
    <text evidence="1">Belongs to the intron maturase 2 family. MatK subfamily.</text>
</comment>
<sequence length="504" mass="59463">MEEFQRYLELDRSQQHYFLYPLIFQEYIYALAHNHGLTRSILLENSGYDNKSSLLIVKRLITRLYQQNHLIVSANDSNQNQFFGCNKNLYYQMISEGFAVILEIPFSIQLMSSLERKGIVKSHNLRSIHSIFPFLEDPFSHLNSALDILIPYPVHLEILVQTLRYRVKDVSSLHLLRLFLYEDPNSNNLITPKKAGSSFSKTNQRFFFFLYNSHVCEYESIFVFLRNQSSHLRSTSFGDLLERIYFYGKIEYLVEVLAKAFQANLWLFKDPFMHYVRYQGKSILASKGTSFLMNKWKYYFVNFWQCYFYLWSKPGRVYINQLSNHSLDLLGYLSSVRLNPSMVRSQMLEKAFIIDNAMKKFDAIVPIIPLIGSLAKAKFCNVLGHPISKAFWTDLSDSDIIDRFGRICRSLSHYHSGSSQKKSLYRIKYILRLSCARTLARKHKSTVRAFLKRLGSELLQEFFTSEEQILSLTFPRVSYTSRRLYRRRIWYLDIICINDFANHE</sequence>
<organism>
    <name type="scientific">Berzelia lanuginosa</name>
    <name type="common">Buttonbush</name>
    <dbReference type="NCBI Taxonomy" id="28530"/>
    <lineage>
        <taxon>Eukaryota</taxon>
        <taxon>Viridiplantae</taxon>
        <taxon>Streptophyta</taxon>
        <taxon>Embryophyta</taxon>
        <taxon>Tracheophyta</taxon>
        <taxon>Spermatophyta</taxon>
        <taxon>Magnoliopsida</taxon>
        <taxon>eudicotyledons</taxon>
        <taxon>Gunneridae</taxon>
        <taxon>Pentapetalae</taxon>
        <taxon>asterids</taxon>
        <taxon>campanulids</taxon>
        <taxon>Bruniales</taxon>
        <taxon>Bruniaceae</taxon>
        <taxon>Brunieae</taxon>
        <taxon>Berzelia</taxon>
    </lineage>
</organism>
<reference key="1">
    <citation type="submission" date="2003-11" db="EMBL/GenBank/DDBJ databases">
        <title>Phylogeny, evolution and flower morphology of Bruniaceae.</title>
        <authorList>
            <person name="Quint M."/>
            <person name="Classen-Bockhoff R."/>
        </authorList>
    </citation>
    <scope>NUCLEOTIDE SEQUENCE [GENOMIC DNA]</scope>
</reference>
<gene>
    <name evidence="1" type="primary">matK</name>
</gene>